<reference key="1">
    <citation type="journal article" date="2001" name="Nature">
        <title>Genome sequence of enterohaemorrhagic Escherichia coli O157:H7.</title>
        <authorList>
            <person name="Perna N.T."/>
            <person name="Plunkett G. III"/>
            <person name="Burland V."/>
            <person name="Mau B."/>
            <person name="Glasner J.D."/>
            <person name="Rose D.J."/>
            <person name="Mayhew G.F."/>
            <person name="Evans P.S."/>
            <person name="Gregor J."/>
            <person name="Kirkpatrick H.A."/>
            <person name="Posfai G."/>
            <person name="Hackett J."/>
            <person name="Klink S."/>
            <person name="Boutin A."/>
            <person name="Shao Y."/>
            <person name="Miller L."/>
            <person name="Grotbeck E.J."/>
            <person name="Davis N.W."/>
            <person name="Lim A."/>
            <person name="Dimalanta E.T."/>
            <person name="Potamousis K."/>
            <person name="Apodaca J."/>
            <person name="Anantharaman T.S."/>
            <person name="Lin J."/>
            <person name="Yen G."/>
            <person name="Schwartz D.C."/>
            <person name="Welch R.A."/>
            <person name="Blattner F.R."/>
        </authorList>
    </citation>
    <scope>NUCLEOTIDE SEQUENCE [LARGE SCALE GENOMIC DNA]</scope>
    <source>
        <strain>O157:H7 / EDL933 / ATCC 700927 / EHEC</strain>
    </source>
</reference>
<reference key="2">
    <citation type="journal article" date="2001" name="DNA Res.">
        <title>Complete genome sequence of enterohemorrhagic Escherichia coli O157:H7 and genomic comparison with a laboratory strain K-12.</title>
        <authorList>
            <person name="Hayashi T."/>
            <person name="Makino K."/>
            <person name="Ohnishi M."/>
            <person name="Kurokawa K."/>
            <person name="Ishii K."/>
            <person name="Yokoyama K."/>
            <person name="Han C.-G."/>
            <person name="Ohtsubo E."/>
            <person name="Nakayama K."/>
            <person name="Murata T."/>
            <person name="Tanaka M."/>
            <person name="Tobe T."/>
            <person name="Iida T."/>
            <person name="Takami H."/>
            <person name="Honda T."/>
            <person name="Sasakawa C."/>
            <person name="Ogasawara N."/>
            <person name="Yasunaga T."/>
            <person name="Kuhara S."/>
            <person name="Shiba T."/>
            <person name="Hattori M."/>
            <person name="Shinagawa H."/>
        </authorList>
    </citation>
    <scope>NUCLEOTIDE SEQUENCE [LARGE SCALE GENOMIC DNA]</scope>
    <source>
        <strain>O157:H7 / Sakai / RIMD 0509952 / EHEC</strain>
    </source>
</reference>
<organism>
    <name type="scientific">Escherichia coli O157:H7</name>
    <dbReference type="NCBI Taxonomy" id="83334"/>
    <lineage>
        <taxon>Bacteria</taxon>
        <taxon>Pseudomonadati</taxon>
        <taxon>Pseudomonadota</taxon>
        <taxon>Gammaproteobacteria</taxon>
        <taxon>Enterobacterales</taxon>
        <taxon>Enterobacteriaceae</taxon>
        <taxon>Escherichia</taxon>
    </lineage>
</organism>
<dbReference type="EMBL" id="AE005174">
    <property type="protein sequence ID" value="AAG54301.1"/>
    <property type="molecule type" value="Genomic_DNA"/>
</dbReference>
<dbReference type="EMBL" id="BA000007">
    <property type="protein sequence ID" value="BAB33424.1"/>
    <property type="molecule type" value="Genomic_DNA"/>
</dbReference>
<dbReference type="PIR" id="A85480">
    <property type="entry name" value="A85480"/>
</dbReference>
<dbReference type="PIR" id="A90629">
    <property type="entry name" value="A90629"/>
</dbReference>
<dbReference type="RefSeq" id="NP_308028.1">
    <property type="nucleotide sequence ID" value="NC_002695.1"/>
</dbReference>
<dbReference type="RefSeq" id="WP_000822720.1">
    <property type="nucleotide sequence ID" value="NZ_VOAI01000002.1"/>
</dbReference>
<dbReference type="GeneID" id="913387"/>
<dbReference type="KEGG" id="ece:Z0001"/>
<dbReference type="KEGG" id="ecs:ECs_0001"/>
<dbReference type="PATRIC" id="fig|83334.175.peg.136"/>
<dbReference type="HOGENOM" id="CLU_221491_0_0_6"/>
<dbReference type="Proteomes" id="UP000000558">
    <property type="component" value="Chromosome"/>
</dbReference>
<dbReference type="Proteomes" id="UP000002519">
    <property type="component" value="Chromosome"/>
</dbReference>
<dbReference type="GO" id="GO:0009088">
    <property type="term" value="P:threonine biosynthetic process"/>
    <property type="evidence" value="ECO:0007669"/>
    <property type="project" value="UniProtKB-UniRule"/>
</dbReference>
<dbReference type="GO" id="GO:0031556">
    <property type="term" value="P:transcriptional attenuation by ribosome"/>
    <property type="evidence" value="ECO:0007669"/>
    <property type="project" value="UniProtKB-UniRule"/>
</dbReference>
<dbReference type="HAMAP" id="MF_01907">
    <property type="entry name" value="Leader_Thr"/>
    <property type="match status" value="1"/>
</dbReference>
<dbReference type="InterPro" id="IPR011720">
    <property type="entry name" value="Thr_lead_pept"/>
</dbReference>
<gene>
    <name evidence="1" type="primary">thrL</name>
    <name type="ordered locus">Z0001</name>
    <name type="ordered locus">ECs0001</name>
</gene>
<feature type="peptide" id="PRO_0000312884" description="thr operon leader peptide">
    <location>
        <begin position="1"/>
        <end position="27"/>
    </location>
</feature>
<name>LPT_ECO57</name>
<protein>
    <recommendedName>
        <fullName evidence="1">thr operon leader peptide</fullName>
    </recommendedName>
    <alternativeName>
        <fullName evidence="1">thr operon attenuator</fullName>
    </alternativeName>
</protein>
<accession>Q8XA85</accession>
<accession>Q7AHV1</accession>
<evidence type="ECO:0000255" key="1">
    <source>
        <dbReference type="HAMAP-Rule" id="MF_01907"/>
    </source>
</evidence>
<comment type="function">
    <text evidence="1">This protein is involved in control of the biosynthesis of threonine.</text>
</comment>
<comment type="similarity">
    <text evidence="1">Belongs to the thr operon leader peptide family.</text>
</comment>
<keyword id="KW-0028">Amino-acid biosynthesis</keyword>
<keyword id="KW-0428">Leader peptide</keyword>
<keyword id="KW-1185">Reference proteome</keyword>
<keyword id="KW-0791">Threonine biosynthesis</keyword>
<proteinExistence type="inferred from homology"/>
<sequence>MKRISTTITTTITTTITITITTGNGAG</sequence>